<organism>
    <name type="scientific">Fucus vesiculosus</name>
    <name type="common">Bladder wrack</name>
    <dbReference type="NCBI Taxonomy" id="49266"/>
    <lineage>
        <taxon>Eukaryota</taxon>
        <taxon>Sar</taxon>
        <taxon>Stramenopiles</taxon>
        <taxon>Ochrophyta</taxon>
        <taxon>PX clade</taxon>
        <taxon>Phaeophyceae</taxon>
        <taxon>Fucales</taxon>
        <taxon>Fucaceae</taxon>
        <taxon>Fucus</taxon>
    </lineage>
</organism>
<gene>
    <name evidence="1" type="primary">atpB</name>
</gene>
<protein>
    <recommendedName>
        <fullName evidence="1">ATP synthase subunit beta, chloroplastic</fullName>
        <ecNumber evidence="1">7.1.2.2</ecNumber>
    </recommendedName>
    <alternativeName>
        <fullName evidence="1">ATP synthase F1 sector subunit beta</fullName>
    </alternativeName>
    <alternativeName>
        <fullName evidence="1">F-ATPase subunit beta</fullName>
    </alternativeName>
</protein>
<keyword id="KW-0066">ATP synthesis</keyword>
<keyword id="KW-0067">ATP-binding</keyword>
<keyword id="KW-0139">CF(1)</keyword>
<keyword id="KW-0150">Chloroplast</keyword>
<keyword id="KW-0375">Hydrogen ion transport</keyword>
<keyword id="KW-0406">Ion transport</keyword>
<keyword id="KW-0472">Membrane</keyword>
<keyword id="KW-0547">Nucleotide-binding</keyword>
<keyword id="KW-0934">Plastid</keyword>
<keyword id="KW-0793">Thylakoid</keyword>
<keyword id="KW-1278">Translocase</keyword>
<keyword id="KW-0813">Transport</keyword>
<name>ATPB_FUCVE</name>
<geneLocation type="chloroplast"/>
<comment type="function">
    <text evidence="1">Produces ATP from ADP in the presence of a proton gradient across the membrane. The catalytic sites are hosted primarily by the beta subunits.</text>
</comment>
<comment type="catalytic activity">
    <reaction evidence="1">
        <text>ATP + H2O + 4 H(+)(in) = ADP + phosphate + 5 H(+)(out)</text>
        <dbReference type="Rhea" id="RHEA:57720"/>
        <dbReference type="ChEBI" id="CHEBI:15377"/>
        <dbReference type="ChEBI" id="CHEBI:15378"/>
        <dbReference type="ChEBI" id="CHEBI:30616"/>
        <dbReference type="ChEBI" id="CHEBI:43474"/>
        <dbReference type="ChEBI" id="CHEBI:456216"/>
        <dbReference type="EC" id="7.1.2.2"/>
    </reaction>
</comment>
<comment type="subunit">
    <text evidence="1">F-type ATPases have 2 components, CF(1) - the catalytic core - and CF(0) - the membrane proton channel. CF(1) has five subunits: alpha(3), beta(3), gamma(1), delta(1), epsilon(1). CF(0) has four main subunits: a(1), b(1), b'(1) and c(9-12).</text>
</comment>
<comment type="subcellular location">
    <subcellularLocation>
        <location evidence="1">Plastid</location>
        <location evidence="1">Chloroplast thylakoid membrane</location>
        <topology evidence="1">Peripheral membrane protein</topology>
    </subcellularLocation>
</comment>
<comment type="similarity">
    <text evidence="1">Belongs to the ATPase alpha/beta chains family.</text>
</comment>
<sequence>MSIEKNNNIGYITQVIGPVIDAVFSSGVLPKIYNALEVEGKDGPIICEVQQLLGDNRVRAISMSATDGLQRGVKVYDTKAPISVPVGKTTLGRIFNVLGQPIDNLGDTPSNETLPIHRSAPAFTDLETRPAIFETGIKVVDLLAPYRRGGKIGLFGGAGVGKTVLIMELINNIAKAHGGVSVFGGVGERTREGNDLYMEMKESGVINEKNLLESKVALVYGQMNEPPGARMRVGLTALTMAEYFRDINKQDVLLFIDNIFRFVQAGSEVSALLGRMPSAVGYQPTLGTEMGALQERITSTNQGSITSIQAVYVPADDLTDPAPATTFAHLDATTVLSRGLAAKGIYPAVDPLDSTSTMLQPLIVGDEHYKTAQLVKETLQRYKELQDIIAILGIDELSEEDRLVVDRARKIERFLSQPFFVAEVFTGSPGKYVDLESTIKGFNMILGGELDDLPEQAFYLVGDINEAISKAKTFNN</sequence>
<accession>Q2PQH4</accession>
<feature type="chain" id="PRO_0000254476" description="ATP synthase subunit beta, chloroplastic">
    <location>
        <begin position="1"/>
        <end position="476"/>
    </location>
</feature>
<feature type="binding site" evidence="1">
    <location>
        <begin position="156"/>
        <end position="163"/>
    </location>
    <ligand>
        <name>ATP</name>
        <dbReference type="ChEBI" id="CHEBI:30616"/>
    </ligand>
</feature>
<reference key="1">
    <citation type="submission" date="2005-11" db="EMBL/GenBank/DDBJ databases">
        <title>The plastid genome sequence of the brown alga Fucus vesiculosus (Phaeophyceae).</title>
        <authorList>
            <person name="Pearson G.A."/>
            <person name="Serrao E.A."/>
            <person name="Viegas C."/>
            <person name="Valente M.S."/>
        </authorList>
    </citation>
    <scope>NUCLEOTIDE SEQUENCE [GENOMIC DNA]</scope>
</reference>
<dbReference type="EC" id="7.1.2.2" evidence="1"/>
<dbReference type="EMBL" id="DQ307681">
    <property type="protein sequence ID" value="ABC25543.1"/>
    <property type="molecule type" value="Genomic_DNA"/>
</dbReference>
<dbReference type="RefSeq" id="YP_005090075.1">
    <property type="nucleotide sequence ID" value="NC_016735.1"/>
</dbReference>
<dbReference type="SMR" id="Q2PQH4"/>
<dbReference type="GeneID" id="11542148"/>
<dbReference type="GO" id="GO:0009535">
    <property type="term" value="C:chloroplast thylakoid membrane"/>
    <property type="evidence" value="ECO:0007669"/>
    <property type="project" value="UniProtKB-SubCell"/>
</dbReference>
<dbReference type="GO" id="GO:0005739">
    <property type="term" value="C:mitochondrion"/>
    <property type="evidence" value="ECO:0007669"/>
    <property type="project" value="GOC"/>
</dbReference>
<dbReference type="GO" id="GO:0045259">
    <property type="term" value="C:proton-transporting ATP synthase complex"/>
    <property type="evidence" value="ECO:0007669"/>
    <property type="project" value="UniProtKB-KW"/>
</dbReference>
<dbReference type="GO" id="GO:0005524">
    <property type="term" value="F:ATP binding"/>
    <property type="evidence" value="ECO:0007669"/>
    <property type="project" value="UniProtKB-UniRule"/>
</dbReference>
<dbReference type="GO" id="GO:0016887">
    <property type="term" value="F:ATP hydrolysis activity"/>
    <property type="evidence" value="ECO:0007669"/>
    <property type="project" value="InterPro"/>
</dbReference>
<dbReference type="GO" id="GO:0046933">
    <property type="term" value="F:proton-transporting ATP synthase activity, rotational mechanism"/>
    <property type="evidence" value="ECO:0007669"/>
    <property type="project" value="UniProtKB-UniRule"/>
</dbReference>
<dbReference type="GO" id="GO:0042776">
    <property type="term" value="P:proton motive force-driven mitochondrial ATP synthesis"/>
    <property type="evidence" value="ECO:0007669"/>
    <property type="project" value="TreeGrafter"/>
</dbReference>
<dbReference type="CDD" id="cd18110">
    <property type="entry name" value="ATP-synt_F1_beta_C"/>
    <property type="match status" value="1"/>
</dbReference>
<dbReference type="CDD" id="cd18115">
    <property type="entry name" value="ATP-synt_F1_beta_N"/>
    <property type="match status" value="1"/>
</dbReference>
<dbReference type="CDD" id="cd01133">
    <property type="entry name" value="F1-ATPase_beta_CD"/>
    <property type="match status" value="1"/>
</dbReference>
<dbReference type="FunFam" id="1.10.1140.10:FF:000001">
    <property type="entry name" value="ATP synthase subunit beta"/>
    <property type="match status" value="1"/>
</dbReference>
<dbReference type="FunFam" id="3.40.50.300:FF:000004">
    <property type="entry name" value="ATP synthase subunit beta"/>
    <property type="match status" value="1"/>
</dbReference>
<dbReference type="Gene3D" id="2.40.10.170">
    <property type="match status" value="1"/>
</dbReference>
<dbReference type="Gene3D" id="1.10.1140.10">
    <property type="entry name" value="Bovine Mitochondrial F1-atpase, Atp Synthase Beta Chain, Chain D, domain 3"/>
    <property type="match status" value="1"/>
</dbReference>
<dbReference type="Gene3D" id="3.40.50.300">
    <property type="entry name" value="P-loop containing nucleotide triphosphate hydrolases"/>
    <property type="match status" value="1"/>
</dbReference>
<dbReference type="HAMAP" id="MF_01347">
    <property type="entry name" value="ATP_synth_beta_bact"/>
    <property type="match status" value="1"/>
</dbReference>
<dbReference type="InterPro" id="IPR003593">
    <property type="entry name" value="AAA+_ATPase"/>
</dbReference>
<dbReference type="InterPro" id="IPR055190">
    <property type="entry name" value="ATP-synt_VA_C"/>
</dbReference>
<dbReference type="InterPro" id="IPR005722">
    <property type="entry name" value="ATP_synth_F1_bsu"/>
</dbReference>
<dbReference type="InterPro" id="IPR020003">
    <property type="entry name" value="ATPase_a/bsu_AS"/>
</dbReference>
<dbReference type="InterPro" id="IPR050053">
    <property type="entry name" value="ATPase_alpha/beta_chains"/>
</dbReference>
<dbReference type="InterPro" id="IPR004100">
    <property type="entry name" value="ATPase_F1/V1/A1_a/bsu_N"/>
</dbReference>
<dbReference type="InterPro" id="IPR036121">
    <property type="entry name" value="ATPase_F1/V1/A1_a/bsu_N_sf"/>
</dbReference>
<dbReference type="InterPro" id="IPR000194">
    <property type="entry name" value="ATPase_F1/V1/A1_a/bsu_nucl-bd"/>
</dbReference>
<dbReference type="InterPro" id="IPR024034">
    <property type="entry name" value="ATPase_F1/V1_b/a_C"/>
</dbReference>
<dbReference type="InterPro" id="IPR027417">
    <property type="entry name" value="P-loop_NTPase"/>
</dbReference>
<dbReference type="NCBIfam" id="TIGR01039">
    <property type="entry name" value="atpD"/>
    <property type="match status" value="1"/>
</dbReference>
<dbReference type="PANTHER" id="PTHR15184">
    <property type="entry name" value="ATP SYNTHASE"/>
    <property type="match status" value="1"/>
</dbReference>
<dbReference type="PANTHER" id="PTHR15184:SF71">
    <property type="entry name" value="ATP SYNTHASE SUBUNIT BETA, MITOCHONDRIAL"/>
    <property type="match status" value="1"/>
</dbReference>
<dbReference type="Pfam" id="PF00006">
    <property type="entry name" value="ATP-synt_ab"/>
    <property type="match status" value="1"/>
</dbReference>
<dbReference type="Pfam" id="PF02874">
    <property type="entry name" value="ATP-synt_ab_N"/>
    <property type="match status" value="1"/>
</dbReference>
<dbReference type="Pfam" id="PF22919">
    <property type="entry name" value="ATP-synt_VA_C"/>
    <property type="match status" value="1"/>
</dbReference>
<dbReference type="SMART" id="SM00382">
    <property type="entry name" value="AAA"/>
    <property type="match status" value="1"/>
</dbReference>
<dbReference type="SUPFAM" id="SSF47917">
    <property type="entry name" value="C-terminal domain of alpha and beta subunits of F1 ATP synthase"/>
    <property type="match status" value="1"/>
</dbReference>
<dbReference type="SUPFAM" id="SSF50615">
    <property type="entry name" value="N-terminal domain of alpha and beta subunits of F1 ATP synthase"/>
    <property type="match status" value="1"/>
</dbReference>
<dbReference type="SUPFAM" id="SSF52540">
    <property type="entry name" value="P-loop containing nucleoside triphosphate hydrolases"/>
    <property type="match status" value="1"/>
</dbReference>
<dbReference type="PROSITE" id="PS00152">
    <property type="entry name" value="ATPASE_ALPHA_BETA"/>
    <property type="match status" value="1"/>
</dbReference>
<evidence type="ECO:0000255" key="1">
    <source>
        <dbReference type="HAMAP-Rule" id="MF_01347"/>
    </source>
</evidence>
<proteinExistence type="inferred from homology"/>